<feature type="chain" id="PRO_1000125794" description="Small ribosomal subunit protein bS18">
    <location>
        <begin position="1"/>
        <end position="80"/>
    </location>
</feature>
<gene>
    <name evidence="1" type="primary">rpsR</name>
    <name type="ordered locus">CLM_4131</name>
</gene>
<protein>
    <recommendedName>
        <fullName evidence="1">Small ribosomal subunit protein bS18</fullName>
    </recommendedName>
    <alternativeName>
        <fullName evidence="2">30S ribosomal protein S18</fullName>
    </alternativeName>
</protein>
<sequence length="80" mass="9345">MAGREGGRRQRRTKRKVCTFCAEKSEAIDYKDINKLRKFVTERGKILPRRISGNCAKHQRELTRAIKRARNIALLPFTTE</sequence>
<evidence type="ECO:0000255" key="1">
    <source>
        <dbReference type="HAMAP-Rule" id="MF_00270"/>
    </source>
</evidence>
<evidence type="ECO:0000305" key="2"/>
<comment type="function">
    <text evidence="1">Binds as a heterodimer with protein bS6 to the central domain of the 16S rRNA, where it helps stabilize the platform of the 30S subunit.</text>
</comment>
<comment type="subunit">
    <text evidence="1">Part of the 30S ribosomal subunit. Forms a tight heterodimer with protein bS6.</text>
</comment>
<comment type="similarity">
    <text evidence="1">Belongs to the bacterial ribosomal protein bS18 family.</text>
</comment>
<dbReference type="EMBL" id="CP001581">
    <property type="protein sequence ID" value="ACO83865.1"/>
    <property type="molecule type" value="Genomic_DNA"/>
</dbReference>
<dbReference type="RefSeq" id="WP_003359407.1">
    <property type="nucleotide sequence ID" value="NC_012563.1"/>
</dbReference>
<dbReference type="SMR" id="C1FP14"/>
<dbReference type="GeneID" id="5188014"/>
<dbReference type="KEGG" id="cby:CLM_4131"/>
<dbReference type="eggNOG" id="COG0238">
    <property type="taxonomic scope" value="Bacteria"/>
</dbReference>
<dbReference type="HOGENOM" id="CLU_148710_2_2_9"/>
<dbReference type="Proteomes" id="UP000001374">
    <property type="component" value="Chromosome"/>
</dbReference>
<dbReference type="GO" id="GO:0022627">
    <property type="term" value="C:cytosolic small ribosomal subunit"/>
    <property type="evidence" value="ECO:0007669"/>
    <property type="project" value="TreeGrafter"/>
</dbReference>
<dbReference type="GO" id="GO:0070181">
    <property type="term" value="F:small ribosomal subunit rRNA binding"/>
    <property type="evidence" value="ECO:0007669"/>
    <property type="project" value="TreeGrafter"/>
</dbReference>
<dbReference type="GO" id="GO:0003735">
    <property type="term" value="F:structural constituent of ribosome"/>
    <property type="evidence" value="ECO:0007669"/>
    <property type="project" value="InterPro"/>
</dbReference>
<dbReference type="GO" id="GO:0006412">
    <property type="term" value="P:translation"/>
    <property type="evidence" value="ECO:0007669"/>
    <property type="project" value="UniProtKB-UniRule"/>
</dbReference>
<dbReference type="FunFam" id="4.10.640.10:FF:000004">
    <property type="entry name" value="30S ribosomal protein S18"/>
    <property type="match status" value="1"/>
</dbReference>
<dbReference type="Gene3D" id="4.10.640.10">
    <property type="entry name" value="Ribosomal protein S18"/>
    <property type="match status" value="1"/>
</dbReference>
<dbReference type="HAMAP" id="MF_00270">
    <property type="entry name" value="Ribosomal_bS18"/>
    <property type="match status" value="1"/>
</dbReference>
<dbReference type="InterPro" id="IPR001648">
    <property type="entry name" value="Ribosomal_bS18"/>
</dbReference>
<dbReference type="InterPro" id="IPR018275">
    <property type="entry name" value="Ribosomal_bS18_CS"/>
</dbReference>
<dbReference type="InterPro" id="IPR036870">
    <property type="entry name" value="Ribosomal_bS18_sf"/>
</dbReference>
<dbReference type="NCBIfam" id="TIGR00165">
    <property type="entry name" value="S18"/>
    <property type="match status" value="1"/>
</dbReference>
<dbReference type="PANTHER" id="PTHR13479">
    <property type="entry name" value="30S RIBOSOMAL PROTEIN S18"/>
    <property type="match status" value="1"/>
</dbReference>
<dbReference type="PANTHER" id="PTHR13479:SF40">
    <property type="entry name" value="SMALL RIBOSOMAL SUBUNIT PROTEIN BS18M"/>
    <property type="match status" value="1"/>
</dbReference>
<dbReference type="Pfam" id="PF01084">
    <property type="entry name" value="Ribosomal_S18"/>
    <property type="match status" value="1"/>
</dbReference>
<dbReference type="PRINTS" id="PR00974">
    <property type="entry name" value="RIBOSOMALS18"/>
</dbReference>
<dbReference type="SUPFAM" id="SSF46911">
    <property type="entry name" value="Ribosomal protein S18"/>
    <property type="match status" value="1"/>
</dbReference>
<dbReference type="PROSITE" id="PS00057">
    <property type="entry name" value="RIBOSOMAL_S18"/>
    <property type="match status" value="1"/>
</dbReference>
<keyword id="KW-0687">Ribonucleoprotein</keyword>
<keyword id="KW-0689">Ribosomal protein</keyword>
<keyword id="KW-0694">RNA-binding</keyword>
<keyword id="KW-0699">rRNA-binding</keyword>
<accession>C1FP14</accession>
<organism>
    <name type="scientific">Clostridium botulinum (strain Kyoto / Type A2)</name>
    <dbReference type="NCBI Taxonomy" id="536232"/>
    <lineage>
        <taxon>Bacteria</taxon>
        <taxon>Bacillati</taxon>
        <taxon>Bacillota</taxon>
        <taxon>Clostridia</taxon>
        <taxon>Eubacteriales</taxon>
        <taxon>Clostridiaceae</taxon>
        <taxon>Clostridium</taxon>
    </lineage>
</organism>
<proteinExistence type="inferred from homology"/>
<name>RS18_CLOBJ</name>
<reference key="1">
    <citation type="submission" date="2008-10" db="EMBL/GenBank/DDBJ databases">
        <title>Genome sequence of Clostridium botulinum A2 Kyoto.</title>
        <authorList>
            <person name="Shrivastava S."/>
            <person name="Brinkac L.M."/>
            <person name="Brown J.L."/>
            <person name="Bruce D."/>
            <person name="Detter C.C."/>
            <person name="Johnson E.A."/>
            <person name="Munk C.A."/>
            <person name="Smith L.A."/>
            <person name="Smith T.J."/>
            <person name="Sutton G."/>
            <person name="Brettin T.S."/>
        </authorList>
    </citation>
    <scope>NUCLEOTIDE SEQUENCE [LARGE SCALE GENOMIC DNA]</scope>
    <source>
        <strain>Kyoto / Type A2</strain>
    </source>
</reference>